<keyword id="KW-0012">Acyltransferase</keyword>
<keyword id="KW-0963">Cytoplasm</keyword>
<keyword id="KW-0808">Transferase</keyword>
<reference key="1">
    <citation type="journal article" date="2010" name="Genome Biol. Evol.">
        <title>Continuing evolution of Burkholderia mallei through genome reduction and large-scale rearrangements.</title>
        <authorList>
            <person name="Losada L."/>
            <person name="Ronning C.M."/>
            <person name="DeShazer D."/>
            <person name="Woods D."/>
            <person name="Fedorova N."/>
            <person name="Kim H.S."/>
            <person name="Shabalina S.A."/>
            <person name="Pearson T.R."/>
            <person name="Brinkac L."/>
            <person name="Tan P."/>
            <person name="Nandi T."/>
            <person name="Crabtree J."/>
            <person name="Badger J."/>
            <person name="Beckstrom-Sternberg S."/>
            <person name="Saqib M."/>
            <person name="Schutzer S.E."/>
            <person name="Keim P."/>
            <person name="Nierman W.C."/>
        </authorList>
    </citation>
    <scope>NUCLEOTIDE SEQUENCE [LARGE SCALE GENOMIC DNA]</scope>
    <source>
        <strain>1106a</strain>
    </source>
</reference>
<gene>
    <name evidence="1" type="primary">lipB</name>
    <name type="ordered locus">BURPS1106A_0463</name>
</gene>
<feature type="chain" id="PRO_0000321626" description="Octanoyltransferase">
    <location>
        <begin position="1"/>
        <end position="246"/>
    </location>
</feature>
<feature type="domain" description="BPL/LPL catalytic" evidence="2">
    <location>
        <begin position="50"/>
        <end position="231"/>
    </location>
</feature>
<feature type="active site" description="Acyl-thioester intermediate" evidence="1">
    <location>
        <position position="193"/>
    </location>
</feature>
<feature type="binding site" evidence="1">
    <location>
        <begin position="90"/>
        <end position="97"/>
    </location>
    <ligand>
        <name>substrate</name>
    </ligand>
</feature>
<feature type="binding site" evidence="1">
    <location>
        <begin position="162"/>
        <end position="164"/>
    </location>
    <ligand>
        <name>substrate</name>
    </ligand>
</feature>
<feature type="binding site" evidence="1">
    <location>
        <begin position="175"/>
        <end position="177"/>
    </location>
    <ligand>
        <name>substrate</name>
    </ligand>
</feature>
<feature type="site" description="Lowers pKa of active site Cys" evidence="1">
    <location>
        <position position="159"/>
    </location>
</feature>
<protein>
    <recommendedName>
        <fullName evidence="1">Octanoyltransferase</fullName>
        <ecNumber evidence="1">2.3.1.181</ecNumber>
    </recommendedName>
    <alternativeName>
        <fullName evidence="1">Lipoate-protein ligase B</fullName>
    </alternativeName>
    <alternativeName>
        <fullName evidence="1">Lipoyl/octanoyl transferase</fullName>
    </alternativeName>
    <alternativeName>
        <fullName evidence="1">Octanoyl-[acyl-carrier-protein]-protein N-octanoyltransferase</fullName>
    </alternativeName>
</protein>
<accession>A3NQX5</accession>
<proteinExistence type="inferred from homology"/>
<name>LIPB_BURP0</name>
<organism>
    <name type="scientific">Burkholderia pseudomallei (strain 1106a)</name>
    <dbReference type="NCBI Taxonomy" id="357348"/>
    <lineage>
        <taxon>Bacteria</taxon>
        <taxon>Pseudomonadati</taxon>
        <taxon>Pseudomonadota</taxon>
        <taxon>Betaproteobacteria</taxon>
        <taxon>Burkholderiales</taxon>
        <taxon>Burkholderiaceae</taxon>
        <taxon>Burkholderia</taxon>
        <taxon>pseudomallei group</taxon>
    </lineage>
</organism>
<evidence type="ECO:0000255" key="1">
    <source>
        <dbReference type="HAMAP-Rule" id="MF_00013"/>
    </source>
</evidence>
<evidence type="ECO:0000255" key="2">
    <source>
        <dbReference type="PROSITE-ProRule" id="PRU01067"/>
    </source>
</evidence>
<sequence>MPSAPAAPDAAASVAPNPPAALPVTVRWLGETPYDACFDAMRAFTDARTPDTDDEIWVVEHPPVYTLGQAGNPAHLLVADSGVPLVKVDRGGQITYHGPGQIVAYLLVDLRRRKLMVRTLVTRIEEAVIETLAAYNLASARKAGAPGIYVESGPHRGAKIAALGLKIRNGCSYHGLSVNVKMDLRPFLAINPCGYAGLETIDMASLGATADWHEVAQTLVRRLIAHLDGATAAAALPQQALEQSND</sequence>
<dbReference type="EC" id="2.3.1.181" evidence="1"/>
<dbReference type="EMBL" id="CP000572">
    <property type="protein sequence ID" value="ABN89212.1"/>
    <property type="molecule type" value="Genomic_DNA"/>
</dbReference>
<dbReference type="SMR" id="A3NQX5"/>
<dbReference type="KEGG" id="bpl:BURPS1106A_0463"/>
<dbReference type="HOGENOM" id="CLU_035168_3_1_4"/>
<dbReference type="UniPathway" id="UPA00538">
    <property type="reaction ID" value="UER00592"/>
</dbReference>
<dbReference type="Proteomes" id="UP000006738">
    <property type="component" value="Chromosome I"/>
</dbReference>
<dbReference type="GO" id="GO:0005737">
    <property type="term" value="C:cytoplasm"/>
    <property type="evidence" value="ECO:0007669"/>
    <property type="project" value="UniProtKB-SubCell"/>
</dbReference>
<dbReference type="GO" id="GO:0033819">
    <property type="term" value="F:lipoyl(octanoyl) transferase activity"/>
    <property type="evidence" value="ECO:0007669"/>
    <property type="project" value="UniProtKB-EC"/>
</dbReference>
<dbReference type="GO" id="GO:0036211">
    <property type="term" value="P:protein modification process"/>
    <property type="evidence" value="ECO:0007669"/>
    <property type="project" value="InterPro"/>
</dbReference>
<dbReference type="CDD" id="cd16444">
    <property type="entry name" value="LipB"/>
    <property type="match status" value="1"/>
</dbReference>
<dbReference type="FunFam" id="3.30.930.10:FF:000020">
    <property type="entry name" value="Octanoyltransferase"/>
    <property type="match status" value="1"/>
</dbReference>
<dbReference type="Gene3D" id="3.30.930.10">
    <property type="entry name" value="Bira Bifunctional Protein, Domain 2"/>
    <property type="match status" value="1"/>
</dbReference>
<dbReference type="HAMAP" id="MF_00013">
    <property type="entry name" value="LipB"/>
    <property type="match status" value="1"/>
</dbReference>
<dbReference type="InterPro" id="IPR045864">
    <property type="entry name" value="aa-tRNA-synth_II/BPL/LPL"/>
</dbReference>
<dbReference type="InterPro" id="IPR004143">
    <property type="entry name" value="BPL_LPL_catalytic"/>
</dbReference>
<dbReference type="InterPro" id="IPR000544">
    <property type="entry name" value="Octanoyltransferase"/>
</dbReference>
<dbReference type="InterPro" id="IPR020605">
    <property type="entry name" value="Octanoyltransferase_CS"/>
</dbReference>
<dbReference type="NCBIfam" id="TIGR00214">
    <property type="entry name" value="lipB"/>
    <property type="match status" value="1"/>
</dbReference>
<dbReference type="NCBIfam" id="NF010922">
    <property type="entry name" value="PRK14342.1"/>
    <property type="match status" value="1"/>
</dbReference>
<dbReference type="NCBIfam" id="NF010923">
    <property type="entry name" value="PRK14343.1"/>
    <property type="match status" value="1"/>
</dbReference>
<dbReference type="PANTHER" id="PTHR10993:SF7">
    <property type="entry name" value="LIPOYLTRANSFERASE 2, MITOCHONDRIAL-RELATED"/>
    <property type="match status" value="1"/>
</dbReference>
<dbReference type="PANTHER" id="PTHR10993">
    <property type="entry name" value="OCTANOYLTRANSFERASE"/>
    <property type="match status" value="1"/>
</dbReference>
<dbReference type="Pfam" id="PF21948">
    <property type="entry name" value="LplA-B_cat"/>
    <property type="match status" value="1"/>
</dbReference>
<dbReference type="PIRSF" id="PIRSF016262">
    <property type="entry name" value="LPLase"/>
    <property type="match status" value="1"/>
</dbReference>
<dbReference type="SUPFAM" id="SSF55681">
    <property type="entry name" value="Class II aaRS and biotin synthetases"/>
    <property type="match status" value="1"/>
</dbReference>
<dbReference type="PROSITE" id="PS51733">
    <property type="entry name" value="BPL_LPL_CATALYTIC"/>
    <property type="match status" value="1"/>
</dbReference>
<dbReference type="PROSITE" id="PS01313">
    <property type="entry name" value="LIPB"/>
    <property type="match status" value="1"/>
</dbReference>
<comment type="function">
    <text evidence="1">Catalyzes the transfer of endogenously produced octanoic acid from octanoyl-acyl-carrier-protein onto the lipoyl domains of lipoate-dependent enzymes. Lipoyl-ACP can also act as a substrate although octanoyl-ACP is likely to be the physiological substrate.</text>
</comment>
<comment type="catalytic activity">
    <reaction evidence="1">
        <text>octanoyl-[ACP] + L-lysyl-[protein] = N(6)-octanoyl-L-lysyl-[protein] + holo-[ACP] + H(+)</text>
        <dbReference type="Rhea" id="RHEA:17665"/>
        <dbReference type="Rhea" id="RHEA-COMP:9636"/>
        <dbReference type="Rhea" id="RHEA-COMP:9685"/>
        <dbReference type="Rhea" id="RHEA-COMP:9752"/>
        <dbReference type="Rhea" id="RHEA-COMP:9928"/>
        <dbReference type="ChEBI" id="CHEBI:15378"/>
        <dbReference type="ChEBI" id="CHEBI:29969"/>
        <dbReference type="ChEBI" id="CHEBI:64479"/>
        <dbReference type="ChEBI" id="CHEBI:78463"/>
        <dbReference type="ChEBI" id="CHEBI:78809"/>
        <dbReference type="EC" id="2.3.1.181"/>
    </reaction>
</comment>
<comment type="pathway">
    <text evidence="1">Protein modification; protein lipoylation via endogenous pathway; protein N(6)-(lipoyl)lysine from octanoyl-[acyl-carrier-protein]: step 1/2.</text>
</comment>
<comment type="subcellular location">
    <subcellularLocation>
        <location evidence="1">Cytoplasm</location>
    </subcellularLocation>
</comment>
<comment type="miscellaneous">
    <text evidence="1">In the reaction, the free carboxyl group of octanoic acid is attached via an amide linkage to the epsilon-amino group of a specific lysine residue of lipoyl domains of lipoate-dependent enzymes.</text>
</comment>
<comment type="similarity">
    <text evidence="1">Belongs to the LipB family.</text>
</comment>